<gene>
    <name type="primary">psaF</name>
    <name type="ordered locus">Ava_1478</name>
</gene>
<evidence type="ECO:0000250" key="1"/>
<evidence type="ECO:0000255" key="2"/>
<evidence type="ECO:0000305" key="3"/>
<dbReference type="EMBL" id="X93923">
    <property type="protein sequence ID" value="CAA63816.1"/>
    <property type="molecule type" value="Genomic_DNA"/>
</dbReference>
<dbReference type="EMBL" id="CP000117">
    <property type="protein sequence ID" value="ABA21101.1"/>
    <property type="molecule type" value="Genomic_DNA"/>
</dbReference>
<dbReference type="PIR" id="E42799">
    <property type="entry name" value="E42799"/>
</dbReference>
<dbReference type="SMR" id="P31091"/>
<dbReference type="STRING" id="240292.Ava_1478"/>
<dbReference type="KEGG" id="ava:Ava_1478"/>
<dbReference type="eggNOG" id="ENOG502ZBQN">
    <property type="taxonomic scope" value="Bacteria"/>
</dbReference>
<dbReference type="HOGENOM" id="CLU_098828_1_0_3"/>
<dbReference type="Proteomes" id="UP000002533">
    <property type="component" value="Chromosome"/>
</dbReference>
<dbReference type="GO" id="GO:0009538">
    <property type="term" value="C:photosystem I reaction center"/>
    <property type="evidence" value="ECO:0007669"/>
    <property type="project" value="InterPro"/>
</dbReference>
<dbReference type="GO" id="GO:0031676">
    <property type="term" value="C:plasma membrane-derived thylakoid membrane"/>
    <property type="evidence" value="ECO:0007669"/>
    <property type="project" value="UniProtKB-SubCell"/>
</dbReference>
<dbReference type="GO" id="GO:0015979">
    <property type="term" value="P:photosynthesis"/>
    <property type="evidence" value="ECO:0007669"/>
    <property type="project" value="UniProtKB-KW"/>
</dbReference>
<dbReference type="Gene3D" id="1.10.8.110">
    <property type="entry name" value="Photosystem I PsaF, reaction centre subunit III"/>
    <property type="match status" value="1"/>
</dbReference>
<dbReference type="InterPro" id="IPR003666">
    <property type="entry name" value="PSI_PsaF"/>
</dbReference>
<dbReference type="InterPro" id="IPR036577">
    <property type="entry name" value="PSI_PsaF_sf"/>
</dbReference>
<dbReference type="PANTHER" id="PTHR34939">
    <property type="entry name" value="PHOTOSYSTEM I REACTION CENTER SUBUNIT III, CHLOROPLASTIC"/>
    <property type="match status" value="1"/>
</dbReference>
<dbReference type="PANTHER" id="PTHR34939:SF1">
    <property type="entry name" value="PHOTOSYSTEM I REACTION CENTER SUBUNIT III, CHLOROPLASTIC"/>
    <property type="match status" value="1"/>
</dbReference>
<dbReference type="Pfam" id="PF02507">
    <property type="entry name" value="PSI_PsaF"/>
    <property type="match status" value="1"/>
</dbReference>
<dbReference type="SUPFAM" id="SSF81536">
    <property type="entry name" value="Subunit III of photosystem I reaction centre, PsaF"/>
    <property type="match status" value="1"/>
</dbReference>
<accession>P31091</accession>
<accession>Q3MD35</accession>
<accession>Q44552</accession>
<sequence>MRRLFALILVICLSFSFAPPAKALGADLTPCAENPAFQALAKNARNTTADPQSGQKRFERYSQALCGPEGYPHLIVDGRLDRAGDFLIPSILFLYIAGWIGWVGRAYLQAIKKDSDTEQKEIQLDLGLALPIIATGFAWPAAAVKELLSGELTAKDSEITVSPR</sequence>
<keyword id="KW-0472">Membrane</keyword>
<keyword id="KW-0602">Photosynthesis</keyword>
<keyword id="KW-0603">Photosystem I</keyword>
<keyword id="KW-0732">Signal</keyword>
<keyword id="KW-0793">Thylakoid</keyword>
<keyword id="KW-0812">Transmembrane</keyword>
<keyword id="KW-1133">Transmembrane helix</keyword>
<feature type="signal peptide">
    <location>
        <begin position="1"/>
        <end position="23"/>
    </location>
</feature>
<feature type="chain" id="PRO_0000029349" description="Photosystem I reaction center subunit III">
    <location>
        <begin position="24"/>
        <end position="164"/>
    </location>
</feature>
<feature type="transmembrane region" description="Helical" evidence="2">
    <location>
        <begin position="83"/>
        <end position="103"/>
    </location>
</feature>
<feature type="transmembrane region" description="Helical" evidence="2">
    <location>
        <begin position="124"/>
        <end position="144"/>
    </location>
</feature>
<reference key="1">
    <citation type="submission" date="1995-12" db="EMBL/GenBank/DDBJ databases">
        <authorList>
            <person name="Ziegler K."/>
            <person name="Schuetz M."/>
            <person name="Zimmermann R."/>
            <person name="Lockau W."/>
        </authorList>
    </citation>
    <scope>NUCLEOTIDE SEQUENCE [GENOMIC DNA]</scope>
</reference>
<reference key="2">
    <citation type="journal article" date="2014" name="Stand. Genomic Sci.">
        <title>Complete genome sequence of Anabaena variabilis ATCC 29413.</title>
        <authorList>
            <person name="Thiel T."/>
            <person name="Pratte B.S."/>
            <person name="Zhong J."/>
            <person name="Goodwin L."/>
            <person name="Copeland A."/>
            <person name="Lucas S."/>
            <person name="Han C."/>
            <person name="Pitluck S."/>
            <person name="Land M.L."/>
            <person name="Kyrpides N.C."/>
            <person name="Woyke T."/>
        </authorList>
    </citation>
    <scope>NUCLEOTIDE SEQUENCE [LARGE SCALE GENOMIC DNA]</scope>
    <source>
        <strain>ATCC 29413 / PCC 7937</strain>
    </source>
</reference>
<reference key="3">
    <citation type="journal article" date="1992" name="J. Biol. Chem.">
        <title>Purification and characterization of the photosystem I complex from the filamentous cyanobacterium Anabaena variabilis ATCC 29413.</title>
        <authorList>
            <person name="Nyhus K.J."/>
            <person name="Ikeuchi M."/>
            <person name="Inoue Y."/>
            <person name="Whitmarsh J."/>
            <person name="Pakrasi H.B."/>
        </authorList>
    </citation>
    <scope>NUCLEOTIDE SEQUENCE [GENOMIC DNA] OF 24-62</scope>
</reference>
<organism>
    <name type="scientific">Trichormus variabilis (strain ATCC 29413 / PCC 7937)</name>
    <name type="common">Anabaena variabilis</name>
    <dbReference type="NCBI Taxonomy" id="240292"/>
    <lineage>
        <taxon>Bacteria</taxon>
        <taxon>Bacillati</taxon>
        <taxon>Cyanobacteriota</taxon>
        <taxon>Cyanophyceae</taxon>
        <taxon>Nostocales</taxon>
        <taxon>Nostocaceae</taxon>
        <taxon>Trichormus</taxon>
    </lineage>
</organism>
<name>PSAF_TRIV2</name>
<comment type="function">
    <text>Probably participates in efficiency of electron transfer from plastocyanin to P700 (or cytochrome c553 in algae and cyanobacteria). This plastocyanin-docking protein contributes to the specific association of plastocyanin to PSI.</text>
</comment>
<comment type="subcellular location">
    <subcellularLocation>
        <location evidence="1">Cellular thylakoid membrane</location>
        <topology evidence="1">Multi-pass membrane protein</topology>
    </subcellularLocation>
</comment>
<comment type="similarity">
    <text evidence="3">Belongs to the PsaF family.</text>
</comment>
<protein>
    <recommendedName>
        <fullName>Photosystem I reaction center subunit III</fullName>
    </recommendedName>
    <alternativeName>
        <fullName>PSI-F</fullName>
    </alternativeName>
</protein>
<proteinExistence type="inferred from homology"/>